<name>POF12_SCHPO</name>
<evidence type="ECO:0000255" key="1">
    <source>
        <dbReference type="PROSITE-ProRule" id="PRU00080"/>
    </source>
</evidence>
<evidence type="ECO:0000269" key="2">
    <source>
    </source>
</evidence>
<evidence type="ECO:0000269" key="3">
    <source>
    </source>
</evidence>
<organism>
    <name type="scientific">Schizosaccharomyces pombe (strain 972 / ATCC 24843)</name>
    <name type="common">Fission yeast</name>
    <dbReference type="NCBI Taxonomy" id="284812"/>
    <lineage>
        <taxon>Eukaryota</taxon>
        <taxon>Fungi</taxon>
        <taxon>Dikarya</taxon>
        <taxon>Ascomycota</taxon>
        <taxon>Taphrinomycotina</taxon>
        <taxon>Schizosaccharomycetes</taxon>
        <taxon>Schizosaccharomycetales</taxon>
        <taxon>Schizosaccharomycetaceae</taxon>
        <taxon>Schizosaccharomyces</taxon>
    </lineage>
</organism>
<comment type="subunit">
    <text evidence="2">Interacts with skp1.</text>
</comment>
<comment type="subcellular location">
    <subcellularLocation>
        <location evidence="3">Nucleus</location>
    </subcellularLocation>
</comment>
<gene>
    <name type="primary">pof12</name>
    <name type="ORF">SPBC56F2.01</name>
</gene>
<feature type="chain" id="PRO_0000119977" description="F-box protein pof12">
    <location>
        <begin position="1"/>
        <end position="440"/>
    </location>
</feature>
<feature type="domain" description="F-box" evidence="1">
    <location>
        <begin position="8"/>
        <end position="54"/>
    </location>
</feature>
<protein>
    <recommendedName>
        <fullName>F-box protein pof12</fullName>
    </recommendedName>
</protein>
<sequence>MTTDVKAKNPASIFSHETLLHVLNDLSAHDLAALERVSRSWNSIVRRSSVWHNLYLSEFGTKHLRRHGRIEKKRRNWKGLFRRQSNWKDGRCKKVESMLPQLLNSEKSVGEDRLGLTLTHQNNIYFCNDVQISKWSSVGNSLKCQAISSFRDETVKSGPAVMCLDNASLYIGLKDGNLLHVTVHETGFGNIENLATFSTKFVALSSHKNYICGLTNDNNLYILQHSHQAGTKLKVLGKYHVSSIEKQVAIHFQQSKEGYEVVHVVFNDYVLSGGWTVSLQEFVFNEYCVKSSRLALHDNKDIEYSQQPASAIFMYGSYILTSHPDNSLILQRLYSTNNELRIKFLGRLLGHVCGVQISKLFSCGRIVSVSKNCADICVWDLHDTNYQSIVSPLMLTCTNIHNKPVSDYEKECKVQDIGLYEDTILITLSDGRILKFLFNI</sequence>
<reference key="1">
    <citation type="submission" date="2001-05" db="EMBL/GenBank/DDBJ databases">
        <title>Systematic genome-wide analysis of F-box protein-encoding genes in fission yeast.</title>
        <authorList>
            <person name="Harrison C.L."/>
            <person name="Toda T."/>
        </authorList>
    </citation>
    <scope>NUCLEOTIDE SEQUENCE [GENOMIC DNA]</scope>
</reference>
<reference key="2">
    <citation type="journal article" date="2002" name="Nature">
        <title>The genome sequence of Schizosaccharomyces pombe.</title>
        <authorList>
            <person name="Wood V."/>
            <person name="Gwilliam R."/>
            <person name="Rajandream M.A."/>
            <person name="Lyne M.H."/>
            <person name="Lyne R."/>
            <person name="Stewart A."/>
            <person name="Sgouros J.G."/>
            <person name="Peat N."/>
            <person name="Hayles J."/>
            <person name="Baker S.G."/>
            <person name="Basham D."/>
            <person name="Bowman S."/>
            <person name="Brooks K."/>
            <person name="Brown D."/>
            <person name="Brown S."/>
            <person name="Chillingworth T."/>
            <person name="Churcher C.M."/>
            <person name="Collins M."/>
            <person name="Connor R."/>
            <person name="Cronin A."/>
            <person name="Davis P."/>
            <person name="Feltwell T."/>
            <person name="Fraser A."/>
            <person name="Gentles S."/>
            <person name="Goble A."/>
            <person name="Hamlin N."/>
            <person name="Harris D.E."/>
            <person name="Hidalgo J."/>
            <person name="Hodgson G."/>
            <person name="Holroyd S."/>
            <person name="Hornsby T."/>
            <person name="Howarth S."/>
            <person name="Huckle E.J."/>
            <person name="Hunt S."/>
            <person name="Jagels K."/>
            <person name="James K.D."/>
            <person name="Jones L."/>
            <person name="Jones M."/>
            <person name="Leather S."/>
            <person name="McDonald S."/>
            <person name="McLean J."/>
            <person name="Mooney P."/>
            <person name="Moule S."/>
            <person name="Mungall K.L."/>
            <person name="Murphy L.D."/>
            <person name="Niblett D."/>
            <person name="Odell C."/>
            <person name="Oliver K."/>
            <person name="O'Neil S."/>
            <person name="Pearson D."/>
            <person name="Quail M.A."/>
            <person name="Rabbinowitsch E."/>
            <person name="Rutherford K.M."/>
            <person name="Rutter S."/>
            <person name="Saunders D."/>
            <person name="Seeger K."/>
            <person name="Sharp S."/>
            <person name="Skelton J."/>
            <person name="Simmonds M.N."/>
            <person name="Squares R."/>
            <person name="Squares S."/>
            <person name="Stevens K."/>
            <person name="Taylor K."/>
            <person name="Taylor R.G."/>
            <person name="Tivey A."/>
            <person name="Walsh S.V."/>
            <person name="Warren T."/>
            <person name="Whitehead S."/>
            <person name="Woodward J.R."/>
            <person name="Volckaert G."/>
            <person name="Aert R."/>
            <person name="Robben J."/>
            <person name="Grymonprez B."/>
            <person name="Weltjens I."/>
            <person name="Vanstreels E."/>
            <person name="Rieger M."/>
            <person name="Schaefer M."/>
            <person name="Mueller-Auer S."/>
            <person name="Gabel C."/>
            <person name="Fuchs M."/>
            <person name="Duesterhoeft A."/>
            <person name="Fritzc C."/>
            <person name="Holzer E."/>
            <person name="Moestl D."/>
            <person name="Hilbert H."/>
            <person name="Borzym K."/>
            <person name="Langer I."/>
            <person name="Beck A."/>
            <person name="Lehrach H."/>
            <person name="Reinhardt R."/>
            <person name="Pohl T.M."/>
            <person name="Eger P."/>
            <person name="Zimmermann W."/>
            <person name="Wedler H."/>
            <person name="Wambutt R."/>
            <person name="Purnelle B."/>
            <person name="Goffeau A."/>
            <person name="Cadieu E."/>
            <person name="Dreano S."/>
            <person name="Gloux S."/>
            <person name="Lelaure V."/>
            <person name="Mottier S."/>
            <person name="Galibert F."/>
            <person name="Aves S.J."/>
            <person name="Xiang Z."/>
            <person name="Hunt C."/>
            <person name="Moore K."/>
            <person name="Hurst S.M."/>
            <person name="Lucas M."/>
            <person name="Rochet M."/>
            <person name="Gaillardin C."/>
            <person name="Tallada V.A."/>
            <person name="Garzon A."/>
            <person name="Thode G."/>
            <person name="Daga R.R."/>
            <person name="Cruzado L."/>
            <person name="Jimenez J."/>
            <person name="Sanchez M."/>
            <person name="del Rey F."/>
            <person name="Benito J."/>
            <person name="Dominguez A."/>
            <person name="Revuelta J.L."/>
            <person name="Moreno S."/>
            <person name="Armstrong J."/>
            <person name="Forsburg S.L."/>
            <person name="Cerutti L."/>
            <person name="Lowe T."/>
            <person name="McCombie W.R."/>
            <person name="Paulsen I."/>
            <person name="Potashkin J."/>
            <person name="Shpakovski G.V."/>
            <person name="Ussery D."/>
            <person name="Barrell B.G."/>
            <person name="Nurse P."/>
        </authorList>
    </citation>
    <scope>NUCLEOTIDE SEQUENCE [LARGE SCALE GENOMIC DNA]</scope>
    <source>
        <strain>972 / ATCC 24843</strain>
    </source>
</reference>
<reference key="3">
    <citation type="journal article" date="2004" name="Genes Cells">
        <title>Molecular interactions of fission yeast Skp1 and its role in the DNA damage checkpoint.</title>
        <authorList>
            <person name="Lehmann A."/>
            <person name="Katayama S."/>
            <person name="Harrison C."/>
            <person name="Dhut S."/>
            <person name="Kitamura K."/>
            <person name="McDonald N."/>
            <person name="Toda T."/>
        </authorList>
    </citation>
    <scope>INTERACTION WITH SKP1</scope>
</reference>
<reference key="4">
    <citation type="journal article" date="2006" name="Nat. Biotechnol.">
        <title>ORFeome cloning and global analysis of protein localization in the fission yeast Schizosaccharomyces pombe.</title>
        <authorList>
            <person name="Matsuyama A."/>
            <person name="Arai R."/>
            <person name="Yashiroda Y."/>
            <person name="Shirai A."/>
            <person name="Kamata A."/>
            <person name="Sekido S."/>
            <person name="Kobayashi Y."/>
            <person name="Hashimoto A."/>
            <person name="Hamamoto M."/>
            <person name="Hiraoka Y."/>
            <person name="Horinouchi S."/>
            <person name="Yoshida M."/>
        </authorList>
    </citation>
    <scope>SUBCELLULAR LOCATION [LARGE SCALE ANALYSIS]</scope>
</reference>
<dbReference type="EMBL" id="AB061726">
    <property type="protein sequence ID" value="BAB55637.1"/>
    <property type="molecule type" value="Genomic_DNA"/>
</dbReference>
<dbReference type="EMBL" id="CU329671">
    <property type="protein sequence ID" value="CAA18880.1"/>
    <property type="molecule type" value="Genomic_DNA"/>
</dbReference>
<dbReference type="PIR" id="T40543">
    <property type="entry name" value="T40543"/>
</dbReference>
<dbReference type="RefSeq" id="NP_596716.1">
    <property type="nucleotide sequence ID" value="NM_001022641.2"/>
</dbReference>
<dbReference type="BioGRID" id="277430">
    <property type="interactions" value="19"/>
</dbReference>
<dbReference type="IntAct" id="O60053">
    <property type="interactions" value="1"/>
</dbReference>
<dbReference type="STRING" id="284812.O60053"/>
<dbReference type="PaxDb" id="4896-SPBC56F2.01.1"/>
<dbReference type="EnsemblFungi" id="SPBC56F2.01.1">
    <property type="protein sequence ID" value="SPBC56F2.01.1:pep"/>
    <property type="gene ID" value="SPBC56F2.01"/>
</dbReference>
<dbReference type="GeneID" id="2540914"/>
<dbReference type="KEGG" id="spo:2540914"/>
<dbReference type="PomBase" id="SPBC56F2.01">
    <property type="gene designation" value="pof12"/>
</dbReference>
<dbReference type="VEuPathDB" id="FungiDB:SPBC56F2.01"/>
<dbReference type="HOGENOM" id="CLU_615620_0_0_1"/>
<dbReference type="InParanoid" id="O60053"/>
<dbReference type="OMA" id="NIFSHET"/>
<dbReference type="PRO" id="PR:O60053"/>
<dbReference type="Proteomes" id="UP000002485">
    <property type="component" value="Chromosome II"/>
</dbReference>
<dbReference type="GO" id="GO:0005634">
    <property type="term" value="C:nucleus"/>
    <property type="evidence" value="ECO:0007005"/>
    <property type="project" value="PomBase"/>
</dbReference>
<dbReference type="GO" id="GO:0000151">
    <property type="term" value="C:ubiquitin ligase complex"/>
    <property type="evidence" value="ECO:0000255"/>
    <property type="project" value="PomBase"/>
</dbReference>
<dbReference type="GO" id="GO:1990756">
    <property type="term" value="F:ubiquitin-like ligase-substrate adaptor activity"/>
    <property type="evidence" value="ECO:0000255"/>
    <property type="project" value="PomBase"/>
</dbReference>
<dbReference type="GO" id="GO:0006511">
    <property type="term" value="P:ubiquitin-dependent protein catabolic process"/>
    <property type="evidence" value="ECO:0000304"/>
    <property type="project" value="PomBase"/>
</dbReference>
<dbReference type="Gene3D" id="1.20.1280.50">
    <property type="match status" value="1"/>
</dbReference>
<dbReference type="InterPro" id="IPR036047">
    <property type="entry name" value="F-box-like_dom_sf"/>
</dbReference>
<dbReference type="InterPro" id="IPR001810">
    <property type="entry name" value="F-box_dom"/>
</dbReference>
<dbReference type="Pfam" id="PF25499">
    <property type="entry name" value="Beta-prop_pof12"/>
    <property type="match status" value="1"/>
</dbReference>
<dbReference type="Pfam" id="PF12937">
    <property type="entry name" value="F-box-like"/>
    <property type="match status" value="1"/>
</dbReference>
<dbReference type="SMART" id="SM00256">
    <property type="entry name" value="FBOX"/>
    <property type="match status" value="1"/>
</dbReference>
<dbReference type="SUPFAM" id="SSF81383">
    <property type="entry name" value="F-box domain"/>
    <property type="match status" value="1"/>
</dbReference>
<dbReference type="SUPFAM" id="SSF101898">
    <property type="entry name" value="NHL repeat"/>
    <property type="match status" value="1"/>
</dbReference>
<dbReference type="PROSITE" id="PS50181">
    <property type="entry name" value="FBOX"/>
    <property type="match status" value="1"/>
</dbReference>
<accession>O60053</accession>
<keyword id="KW-0539">Nucleus</keyword>
<keyword id="KW-1185">Reference proteome</keyword>
<keyword id="KW-0833">Ubl conjugation pathway</keyword>
<proteinExistence type="evidence at protein level"/>